<protein>
    <recommendedName>
        <fullName evidence="8">E3 ubiquitin-protein ligase SP1</fullName>
        <ecNumber evidence="8">2.3.2.27</ecNumber>
    </recommendedName>
    <alternativeName>
        <fullName evidence="6">DIAP1-like protein 1</fullName>
    </alternativeName>
    <alternativeName>
        <fullName evidence="7">Protein SUPPRESSOR OF PPI1 LOCUS 1</fullName>
    </alternativeName>
    <alternativeName>
        <fullName evidence="8">RING-type E3 ubiquitin transferase SP1</fullName>
    </alternativeName>
</protein>
<sequence length="343" mass="37908">MIPWGGVTCCLSAAALYLLGRSSGRDAEVLETVTRVNQLKELAQLLELDSKILPFIVAVSGRVGSETPIKCEHSGIRGVIVEETAEQHFLKHNETGSWVQDSALMLSMSKEVPWFLDDGTSRVHVMGARGATGFALTVGSEVFEESGRSLVRGTLDYLQGLKMLGVKRIERVLPTGIPLTIVGEAVKDDIGEFRIQKPDRGPFYVSSKSLDQLISNLGKWSRLYKYASMGFTVLGVFLITKHVIDSVLERRRRRQLQKRVLDAAAKRAELESEGSNGTRESISDSTKKEDAVPDLCVICLEQEYNAVFVPCGHMCCCTACSSHLTSCPLCRRRIDLAVKTYRH</sequence>
<gene>
    <name evidence="7" type="primary">SP1</name>
    <name evidence="6" type="synonym">DIAL1</name>
    <name evidence="10" type="ordered locus">At1g63900/At1g63890</name>
    <name evidence="11 12" type="ORF">T12P18.8/T12P18.9</name>
</gene>
<comment type="function">
    <text evidence="3 4 5">E3 ubiquitin-protein ligase involved in the regulation of protein import in the chloroplast. Associates with TOC complexes and mediates ubiquitination of TOC components, promoting their degradation via the ubiquitin-proteasome system (UPS). Plays a role in the reorganization of the TOC machinery. Involved in a mechanism that regulates plastid biogenesis via UPS (PubMed:23118188). Promotes stress tolerance by depleting the chloroplast protein import apparatus, which limits photosystem assembly and the potential for reactive oxygen species (ROS) formation (PubMed:26387714). May act as negative regulator of programmed cell death (PCD) during biotic stress (PubMed:20972793).</text>
</comment>
<comment type="catalytic activity">
    <reaction evidence="8">
        <text>S-ubiquitinyl-[E2 ubiquitin-conjugating enzyme]-L-cysteine + [acceptor protein]-L-lysine = [E2 ubiquitin-conjugating enzyme]-L-cysteine + N(6)-ubiquitinyl-[acceptor protein]-L-lysine.</text>
        <dbReference type="EC" id="2.3.2.27"/>
    </reaction>
</comment>
<comment type="pathway">
    <text evidence="8">Protein modification; protein ubiquitination.</text>
</comment>
<comment type="subunit">
    <text evidence="4">Interacts with TOC33, TOC75-3 and TOC159.</text>
</comment>
<comment type="interaction">
    <interactant intactId="EBI-6559199">
        <id>Q8L7N4</id>
    </interactant>
    <interactant intactId="EBI-639063">
        <id>O81283</id>
        <label>TOC159</label>
    </interactant>
    <organismsDiffer>false</organismsDiffer>
    <experiments>2</experiments>
</comment>
<comment type="interaction">
    <interactant intactId="EBI-6559199">
        <id>Q8L7N4</id>
    </interactant>
    <interactant intactId="EBI-639377">
        <id>O23680</id>
        <label>TOC33</label>
    </interactant>
    <organismsDiffer>false</organismsDiffer>
    <experiments>2</experiments>
</comment>
<comment type="interaction">
    <interactant intactId="EBI-6559199">
        <id>Q8L7N4</id>
    </interactant>
    <interactant intactId="EBI-639078">
        <id>Q9STE8</id>
        <label>TOC75-3</label>
    </interactant>
    <organismsDiffer>false</organismsDiffer>
    <experiments>2</experiments>
</comment>
<comment type="subcellular location">
    <subcellularLocation>
        <location evidence="4">Plastid</location>
        <location evidence="4">Chloroplast outer membrane</location>
        <topology evidence="1">Multi-pass membrane protein</topology>
    </subcellularLocation>
</comment>
<comment type="alternative products">
    <event type="alternative splicing"/>
    <isoform>
        <id>Q8L7N4-1</id>
        <name>1</name>
        <sequence type="displayed"/>
    </isoform>
    <text evidence="8">A number of isoforms are produced. According to EST sequences.</text>
</comment>
<comment type="induction">
    <text evidence="3">By infection with the bacterial pathogen Pseudomonas syringae pv. tomato, and treatment with fumonisin B1, a mycotoxin inducing apoptosis-like programmed cell death (PCD).</text>
</comment>
<comment type="domain">
    <text evidence="4">The zinc finger domain is required for E3 ligase activity.</text>
</comment>
<comment type="PTM">
    <text evidence="4">Auto-ubiquitinated.</text>
</comment>
<comment type="disruption phenotype">
    <text evidence="3 4 5">No visible phenotype under normal growth conditions, but mutant plants show increased disease symptoms and cell death after inoculation with an avirulent strain of Pseudomonas syringae pv. tomato DC3000 (PubMed:20972793). Pale-green phenotype with low survival rates during de-etiolation (PubMed:23118188). Hypersensitivity to salt, osmotic, and oxidative stresses (PubMed:26387714).</text>
</comment>
<comment type="sequence caution" evidence="8">
    <conflict type="erroneous gene model prediction">
        <sequence resource="EMBL-CDS" id="AAG52446"/>
    </conflict>
    <text>Was originally thought to correspond to two different genes At1g63890 and At1g63900.</text>
</comment>
<comment type="sequence caution" evidence="8">
    <conflict type="erroneous gene model prediction">
        <sequence resource="EMBL-CDS" id="AAG52461"/>
    </conflict>
    <text>Was originally thought to correspond to two different genes At1g63890 and At1g63900.</text>
</comment>
<evidence type="ECO:0000255" key="1"/>
<evidence type="ECO:0000255" key="2">
    <source>
        <dbReference type="PROSITE-ProRule" id="PRU00175"/>
    </source>
</evidence>
<evidence type="ECO:0000269" key="3">
    <source>
    </source>
</evidence>
<evidence type="ECO:0000269" key="4">
    <source>
    </source>
</evidence>
<evidence type="ECO:0000269" key="5">
    <source>
    </source>
</evidence>
<evidence type="ECO:0000303" key="6">
    <source>
    </source>
</evidence>
<evidence type="ECO:0000303" key="7">
    <source>
    </source>
</evidence>
<evidence type="ECO:0000305" key="8"/>
<evidence type="ECO:0000305" key="9">
    <source>
    </source>
</evidence>
<evidence type="ECO:0000312" key="10">
    <source>
        <dbReference type="Araport" id="AT1G63900"/>
    </source>
</evidence>
<evidence type="ECO:0000312" key="11">
    <source>
        <dbReference type="EMBL" id="AAG52446.1"/>
    </source>
</evidence>
<evidence type="ECO:0000312" key="12">
    <source>
        <dbReference type="EMBL" id="AAG52461.1"/>
    </source>
</evidence>
<proteinExistence type="evidence at protein level"/>
<dbReference type="EC" id="2.3.2.27" evidence="8"/>
<dbReference type="EMBL" id="AC010852">
    <property type="protein sequence ID" value="AAG52446.1"/>
    <property type="status" value="ALT_SEQ"/>
    <property type="molecule type" value="Genomic_DNA"/>
</dbReference>
<dbReference type="EMBL" id="AC010852">
    <property type="protein sequence ID" value="AAG52461.1"/>
    <property type="status" value="ALT_SEQ"/>
    <property type="molecule type" value="Genomic_DNA"/>
</dbReference>
<dbReference type="EMBL" id="CP002684">
    <property type="protein sequence ID" value="AEE34164.1"/>
    <property type="molecule type" value="Genomic_DNA"/>
</dbReference>
<dbReference type="EMBL" id="AY128352">
    <property type="protein sequence ID" value="AAM91555.1"/>
    <property type="molecule type" value="mRNA"/>
</dbReference>
<dbReference type="EMBL" id="BT000008">
    <property type="protein sequence ID" value="AAN15327.1"/>
    <property type="molecule type" value="mRNA"/>
</dbReference>
<dbReference type="EMBL" id="AK176213">
    <property type="protein sequence ID" value="BAD43976.1"/>
    <property type="molecule type" value="mRNA"/>
</dbReference>
<dbReference type="EMBL" id="AK176755">
    <property type="protein sequence ID" value="BAD44518.1"/>
    <property type="molecule type" value="mRNA"/>
</dbReference>
<dbReference type="EMBL" id="DQ059103">
    <property type="protein sequence ID" value="AAY57589.1"/>
    <property type="molecule type" value="mRNA"/>
</dbReference>
<dbReference type="PIR" id="A96664">
    <property type="entry name" value="A96664"/>
</dbReference>
<dbReference type="PIR" id="B96664">
    <property type="entry name" value="B96664"/>
</dbReference>
<dbReference type="RefSeq" id="NP_176574.2">
    <molecule id="Q8L7N4-1"/>
    <property type="nucleotide sequence ID" value="NM_105064.4"/>
</dbReference>
<dbReference type="SMR" id="Q8L7N4"/>
<dbReference type="FunCoup" id="Q8L7N4">
    <property type="interactions" value="2367"/>
</dbReference>
<dbReference type="IntAct" id="Q8L7N4">
    <property type="interactions" value="6"/>
</dbReference>
<dbReference type="STRING" id="3702.Q8L7N4"/>
<dbReference type="iPTMnet" id="Q8L7N4"/>
<dbReference type="PaxDb" id="3702-AT1G63900.2"/>
<dbReference type="ProteomicsDB" id="245332">
    <molecule id="Q8L7N4-1"/>
</dbReference>
<dbReference type="EnsemblPlants" id="AT1G63900.1">
    <molecule id="Q8L7N4-1"/>
    <property type="protein sequence ID" value="AT1G63900.1"/>
    <property type="gene ID" value="AT1G63900"/>
</dbReference>
<dbReference type="GeneID" id="842693"/>
<dbReference type="Gramene" id="AT1G63900.1">
    <molecule id="Q8L7N4-1"/>
    <property type="protein sequence ID" value="AT1G63900.1"/>
    <property type="gene ID" value="AT1G63900"/>
</dbReference>
<dbReference type="KEGG" id="ath:AT1G63900"/>
<dbReference type="Araport" id="AT1G63900"/>
<dbReference type="TAIR" id="AT1G63900">
    <property type="gene designation" value="DAL1"/>
</dbReference>
<dbReference type="eggNOG" id="KOG1571">
    <property type="taxonomic scope" value="Eukaryota"/>
</dbReference>
<dbReference type="InParanoid" id="Q8L7N4"/>
<dbReference type="OMA" id="YILWKQY"/>
<dbReference type="OrthoDB" id="66726at2759"/>
<dbReference type="PhylomeDB" id="Q8L7N4"/>
<dbReference type="UniPathway" id="UPA00143"/>
<dbReference type="PRO" id="PR:Q8L7N4"/>
<dbReference type="Proteomes" id="UP000006548">
    <property type="component" value="Chromosome 1"/>
</dbReference>
<dbReference type="ExpressionAtlas" id="Q8L7N4">
    <property type="expression patterns" value="baseline and differential"/>
</dbReference>
<dbReference type="GO" id="GO:0009707">
    <property type="term" value="C:chloroplast outer membrane"/>
    <property type="evidence" value="ECO:0000314"/>
    <property type="project" value="UniProtKB"/>
</dbReference>
<dbReference type="GO" id="GO:0004842">
    <property type="term" value="F:ubiquitin-protein transferase activity"/>
    <property type="evidence" value="ECO:0007669"/>
    <property type="project" value="InterPro"/>
</dbReference>
<dbReference type="GO" id="GO:0008270">
    <property type="term" value="F:zinc ion binding"/>
    <property type="evidence" value="ECO:0007669"/>
    <property type="project" value="UniProtKB-KW"/>
</dbReference>
<dbReference type="GO" id="GO:0016567">
    <property type="term" value="P:protein ubiquitination"/>
    <property type="evidence" value="ECO:0007669"/>
    <property type="project" value="UniProtKB-UniPathway"/>
</dbReference>
<dbReference type="GO" id="GO:1904215">
    <property type="term" value="P:regulation of protein import into chloroplast stroma"/>
    <property type="evidence" value="ECO:0000314"/>
    <property type="project" value="UniProtKB"/>
</dbReference>
<dbReference type="FunFam" id="3.30.40.10:FF:000909">
    <property type="entry name" value="E3 ubiquitin-protein ligase SP1"/>
    <property type="match status" value="1"/>
</dbReference>
<dbReference type="Gene3D" id="3.30.40.10">
    <property type="entry name" value="Zinc/RING finger domain, C3HC4 (zinc finger)"/>
    <property type="match status" value="1"/>
</dbReference>
<dbReference type="InterPro" id="IPR022170">
    <property type="entry name" value="MUL1-like"/>
</dbReference>
<dbReference type="InterPro" id="IPR044231">
    <property type="entry name" value="SP1/SPL1"/>
</dbReference>
<dbReference type="InterPro" id="IPR001841">
    <property type="entry name" value="Znf_RING"/>
</dbReference>
<dbReference type="InterPro" id="IPR013083">
    <property type="entry name" value="Znf_RING/FYVE/PHD"/>
</dbReference>
<dbReference type="PANTHER" id="PTHR47568">
    <property type="match status" value="1"/>
</dbReference>
<dbReference type="PANTHER" id="PTHR47568:SF2">
    <property type="entry name" value="E3 UBIQUITIN-PROTEIN LIGASE SP1-RELATED"/>
    <property type="match status" value="1"/>
</dbReference>
<dbReference type="Pfam" id="PF12483">
    <property type="entry name" value="GIDE"/>
    <property type="match status" value="1"/>
</dbReference>
<dbReference type="Pfam" id="PF13920">
    <property type="entry name" value="zf-C3HC4_3"/>
    <property type="match status" value="1"/>
</dbReference>
<dbReference type="SUPFAM" id="SSF57850">
    <property type="entry name" value="RING/U-box"/>
    <property type="match status" value="1"/>
</dbReference>
<dbReference type="PROSITE" id="PS50089">
    <property type="entry name" value="ZF_RING_2"/>
    <property type="match status" value="1"/>
</dbReference>
<accession>Q8L7N4</accession>
<accession>Q9CAK2</accession>
<accession>Q9CAK3</accession>
<feature type="chain" id="PRO_0000436708" description="E3 ubiquitin-protein ligase SP1">
    <location>
        <begin position="1"/>
        <end position="343"/>
    </location>
</feature>
<feature type="transmembrane region" description="Helical" evidence="1">
    <location>
        <begin position="1"/>
        <end position="21"/>
    </location>
</feature>
<feature type="topological domain" description="Chloroplast intermembrane" evidence="9">
    <location>
        <begin position="22"/>
        <end position="222"/>
    </location>
</feature>
<feature type="transmembrane region" description="Helical" evidence="1">
    <location>
        <begin position="223"/>
        <end position="244"/>
    </location>
</feature>
<feature type="topological domain" description="Cytoplasmic" evidence="9">
    <location>
        <begin position="245"/>
        <end position="343"/>
    </location>
</feature>
<feature type="zinc finger region" description="RING-type" evidence="2">
    <location>
        <begin position="296"/>
        <end position="331"/>
    </location>
</feature>
<feature type="mutagenesis site" description="Loss of E3 ubiquitin-protein ligase activity; loss of auto-ubiquitination." evidence="4">
    <original>C</original>
    <variation>A</variation>
    <location>
        <position position="330"/>
    </location>
</feature>
<name>SP1_ARATH</name>
<reference key="1">
    <citation type="journal article" date="2000" name="Nature">
        <title>Sequence and analysis of chromosome 1 of the plant Arabidopsis thaliana.</title>
        <authorList>
            <person name="Theologis A."/>
            <person name="Ecker J.R."/>
            <person name="Palm C.J."/>
            <person name="Federspiel N.A."/>
            <person name="Kaul S."/>
            <person name="White O."/>
            <person name="Alonso J."/>
            <person name="Altafi H."/>
            <person name="Araujo R."/>
            <person name="Bowman C.L."/>
            <person name="Brooks S.Y."/>
            <person name="Buehler E."/>
            <person name="Chan A."/>
            <person name="Chao Q."/>
            <person name="Chen H."/>
            <person name="Cheuk R.F."/>
            <person name="Chin C.W."/>
            <person name="Chung M.K."/>
            <person name="Conn L."/>
            <person name="Conway A.B."/>
            <person name="Conway A.R."/>
            <person name="Creasy T.H."/>
            <person name="Dewar K."/>
            <person name="Dunn P."/>
            <person name="Etgu P."/>
            <person name="Feldblyum T.V."/>
            <person name="Feng J.-D."/>
            <person name="Fong B."/>
            <person name="Fujii C.Y."/>
            <person name="Gill J.E."/>
            <person name="Goldsmith A.D."/>
            <person name="Haas B."/>
            <person name="Hansen N.F."/>
            <person name="Hughes B."/>
            <person name="Huizar L."/>
            <person name="Hunter J.L."/>
            <person name="Jenkins J."/>
            <person name="Johnson-Hopson C."/>
            <person name="Khan S."/>
            <person name="Khaykin E."/>
            <person name="Kim C.J."/>
            <person name="Koo H.L."/>
            <person name="Kremenetskaia I."/>
            <person name="Kurtz D.B."/>
            <person name="Kwan A."/>
            <person name="Lam B."/>
            <person name="Langin-Hooper S."/>
            <person name="Lee A."/>
            <person name="Lee J.M."/>
            <person name="Lenz C.A."/>
            <person name="Li J.H."/>
            <person name="Li Y.-P."/>
            <person name="Lin X."/>
            <person name="Liu S.X."/>
            <person name="Liu Z.A."/>
            <person name="Luros J.S."/>
            <person name="Maiti R."/>
            <person name="Marziali A."/>
            <person name="Militscher J."/>
            <person name="Miranda M."/>
            <person name="Nguyen M."/>
            <person name="Nierman W.C."/>
            <person name="Osborne B.I."/>
            <person name="Pai G."/>
            <person name="Peterson J."/>
            <person name="Pham P.K."/>
            <person name="Rizzo M."/>
            <person name="Rooney T."/>
            <person name="Rowley D."/>
            <person name="Sakano H."/>
            <person name="Salzberg S.L."/>
            <person name="Schwartz J.R."/>
            <person name="Shinn P."/>
            <person name="Southwick A.M."/>
            <person name="Sun H."/>
            <person name="Tallon L.J."/>
            <person name="Tambunga G."/>
            <person name="Toriumi M.J."/>
            <person name="Town C.D."/>
            <person name="Utterback T."/>
            <person name="Van Aken S."/>
            <person name="Vaysberg M."/>
            <person name="Vysotskaia V.S."/>
            <person name="Walker M."/>
            <person name="Wu D."/>
            <person name="Yu G."/>
            <person name="Fraser C.M."/>
            <person name="Venter J.C."/>
            <person name="Davis R.W."/>
        </authorList>
    </citation>
    <scope>NUCLEOTIDE SEQUENCE [LARGE SCALE GENOMIC DNA]</scope>
    <source>
        <strain>cv. Columbia</strain>
    </source>
</reference>
<reference key="2">
    <citation type="journal article" date="2017" name="Plant J.">
        <title>Araport11: a complete reannotation of the Arabidopsis thaliana reference genome.</title>
        <authorList>
            <person name="Cheng C.Y."/>
            <person name="Krishnakumar V."/>
            <person name="Chan A.P."/>
            <person name="Thibaud-Nissen F."/>
            <person name="Schobel S."/>
            <person name="Town C.D."/>
        </authorList>
    </citation>
    <scope>GENOME REANNOTATION</scope>
    <source>
        <strain>cv. Columbia</strain>
    </source>
</reference>
<reference key="3">
    <citation type="journal article" date="2003" name="Science">
        <title>Empirical analysis of transcriptional activity in the Arabidopsis genome.</title>
        <authorList>
            <person name="Yamada K."/>
            <person name="Lim J."/>
            <person name="Dale J.M."/>
            <person name="Chen H."/>
            <person name="Shinn P."/>
            <person name="Palm C.J."/>
            <person name="Southwick A.M."/>
            <person name="Wu H.C."/>
            <person name="Kim C.J."/>
            <person name="Nguyen M."/>
            <person name="Pham P.K."/>
            <person name="Cheuk R.F."/>
            <person name="Karlin-Newmann G."/>
            <person name="Liu S.X."/>
            <person name="Lam B."/>
            <person name="Sakano H."/>
            <person name="Wu T."/>
            <person name="Yu G."/>
            <person name="Miranda M."/>
            <person name="Quach H.L."/>
            <person name="Tripp M."/>
            <person name="Chang C.H."/>
            <person name="Lee J.M."/>
            <person name="Toriumi M.J."/>
            <person name="Chan M.M."/>
            <person name="Tang C.C."/>
            <person name="Onodera C.S."/>
            <person name="Deng J.M."/>
            <person name="Akiyama K."/>
            <person name="Ansari Y."/>
            <person name="Arakawa T."/>
            <person name="Banh J."/>
            <person name="Banno F."/>
            <person name="Bowser L."/>
            <person name="Brooks S.Y."/>
            <person name="Carninci P."/>
            <person name="Chao Q."/>
            <person name="Choy N."/>
            <person name="Enju A."/>
            <person name="Goldsmith A.D."/>
            <person name="Gurjal M."/>
            <person name="Hansen N.F."/>
            <person name="Hayashizaki Y."/>
            <person name="Johnson-Hopson C."/>
            <person name="Hsuan V.W."/>
            <person name="Iida K."/>
            <person name="Karnes M."/>
            <person name="Khan S."/>
            <person name="Koesema E."/>
            <person name="Ishida J."/>
            <person name="Jiang P.X."/>
            <person name="Jones T."/>
            <person name="Kawai J."/>
            <person name="Kamiya A."/>
            <person name="Meyers C."/>
            <person name="Nakajima M."/>
            <person name="Narusaka M."/>
            <person name="Seki M."/>
            <person name="Sakurai T."/>
            <person name="Satou M."/>
            <person name="Tamse R."/>
            <person name="Vaysberg M."/>
            <person name="Wallender E.K."/>
            <person name="Wong C."/>
            <person name="Yamamura Y."/>
            <person name="Yuan S."/>
            <person name="Shinozaki K."/>
            <person name="Davis R.W."/>
            <person name="Theologis A."/>
            <person name="Ecker J.R."/>
        </authorList>
    </citation>
    <scope>NUCLEOTIDE SEQUENCE [LARGE SCALE MRNA]</scope>
    <source>
        <strain>cv. Columbia</strain>
    </source>
</reference>
<reference key="4">
    <citation type="submission" date="2004-09" db="EMBL/GenBank/DDBJ databases">
        <title>Large-scale analysis of RIKEN Arabidopsis full-length (RAFL) cDNAs.</title>
        <authorList>
            <person name="Totoki Y."/>
            <person name="Seki M."/>
            <person name="Ishida J."/>
            <person name="Nakajima M."/>
            <person name="Enju A."/>
            <person name="Kamiya A."/>
            <person name="Narusaka M."/>
            <person name="Shin-i T."/>
            <person name="Nakagawa M."/>
            <person name="Sakamoto N."/>
            <person name="Oishi K."/>
            <person name="Kohara Y."/>
            <person name="Kobayashi M."/>
            <person name="Toyoda A."/>
            <person name="Sakaki Y."/>
            <person name="Sakurai T."/>
            <person name="Iida K."/>
            <person name="Akiyama K."/>
            <person name="Satou M."/>
            <person name="Toyoda T."/>
            <person name="Konagaya A."/>
            <person name="Carninci P."/>
            <person name="Kawai J."/>
            <person name="Hayashizaki Y."/>
            <person name="Shinozaki K."/>
        </authorList>
    </citation>
    <scope>NUCLEOTIDE SEQUENCE [LARGE SCALE MRNA]</scope>
    <source>
        <strain>cv. Columbia</strain>
    </source>
</reference>
<reference key="5">
    <citation type="journal article" date="2005" name="Plant Physiol.">
        <title>Functional analysis of the RING-type ubiquitin ligase family of Arabidopsis.</title>
        <authorList>
            <person name="Stone S.L."/>
            <person name="Hauksdottir H."/>
            <person name="Troy A."/>
            <person name="Herschleb J."/>
            <person name="Kraft E."/>
            <person name="Callis J."/>
        </authorList>
    </citation>
    <scope>NUCLEOTIDE SEQUENCE [MRNA] OF 229-343</scope>
    <source>
        <strain>cv. Columbia</strain>
        <tissue>Leaf</tissue>
    </source>
</reference>
<reference key="6">
    <citation type="journal article" date="2011" name="Plant Cell Rep.">
        <title>Arabidopsis DAL1 and DAL2, two RING finger proteins homologous to Drosophila DIAP1, are involved in regulation of programmed cell death.</title>
        <authorList>
            <person name="Basnayake B.M."/>
            <person name="Li D."/>
            <person name="Zhang H."/>
            <person name="Li G."/>
            <person name="Virk N."/>
            <person name="Song F."/>
        </authorList>
    </citation>
    <scope>FUNCTION</scope>
    <scope>INDUCTION</scope>
    <scope>DISRUPTION PHENOTYPE</scope>
</reference>
<reference key="7">
    <citation type="journal article" date="2012" name="Science">
        <title>Chloroplast biogenesis is regulated by direct action of the ubiquitin-proteasome system.</title>
        <authorList>
            <person name="Ling Q."/>
            <person name="Huang W."/>
            <person name="Baldwin A."/>
            <person name="Jarvis P."/>
        </authorList>
    </citation>
    <scope>FUNCTION</scope>
    <scope>INTERACTION WITH TOC33; TOC75-3 AND TOC159</scope>
    <scope>SUBCELLULAR LOCATION</scope>
    <scope>DOMAIN</scope>
    <scope>TOPOLOGY</scope>
    <scope>AUTOUBIQUITINATION</scope>
    <scope>DISRUPTION PHENOTYPE</scope>
    <scope>MUTAGENESIS OF CYS-330</scope>
</reference>
<reference key="8">
    <citation type="journal article" date="2015" name="Curr. Biol.">
        <title>Regulation of chloroplast protein import by the ubiquitin E3 ligase SP1 is important for stress tolerance in plants.</title>
        <authorList>
            <person name="Ling Q."/>
            <person name="Jarvis P."/>
        </authorList>
    </citation>
    <scope>FUNCTION</scope>
    <scope>DISRUPTION PHENOTYPE</scope>
</reference>
<keyword id="KW-0025">Alternative splicing</keyword>
<keyword id="KW-0150">Chloroplast</keyword>
<keyword id="KW-0472">Membrane</keyword>
<keyword id="KW-0479">Metal-binding</keyword>
<keyword id="KW-0934">Plastid</keyword>
<keyword id="KW-1002">Plastid outer membrane</keyword>
<keyword id="KW-1185">Reference proteome</keyword>
<keyword id="KW-0346">Stress response</keyword>
<keyword id="KW-0808">Transferase</keyword>
<keyword id="KW-0812">Transmembrane</keyword>
<keyword id="KW-1133">Transmembrane helix</keyword>
<keyword id="KW-0832">Ubl conjugation</keyword>
<keyword id="KW-0833">Ubl conjugation pathway</keyword>
<keyword id="KW-0862">Zinc</keyword>
<keyword id="KW-0863">Zinc-finger</keyword>
<organism>
    <name type="scientific">Arabidopsis thaliana</name>
    <name type="common">Mouse-ear cress</name>
    <dbReference type="NCBI Taxonomy" id="3702"/>
    <lineage>
        <taxon>Eukaryota</taxon>
        <taxon>Viridiplantae</taxon>
        <taxon>Streptophyta</taxon>
        <taxon>Embryophyta</taxon>
        <taxon>Tracheophyta</taxon>
        <taxon>Spermatophyta</taxon>
        <taxon>Magnoliopsida</taxon>
        <taxon>eudicotyledons</taxon>
        <taxon>Gunneridae</taxon>
        <taxon>Pentapetalae</taxon>
        <taxon>rosids</taxon>
        <taxon>malvids</taxon>
        <taxon>Brassicales</taxon>
        <taxon>Brassicaceae</taxon>
        <taxon>Camelineae</taxon>
        <taxon>Arabidopsis</taxon>
    </lineage>
</organism>